<proteinExistence type="evidence at transcript level"/>
<evidence type="ECO:0000255" key="1"/>
<evidence type="ECO:0000269" key="2">
    <source>
    </source>
</evidence>
<evidence type="ECO:0000305" key="3"/>
<accession>B6SEH8</accession>
<feature type="signal peptide" evidence="1">
    <location>
        <begin position="1"/>
        <end position="21"/>
    </location>
</feature>
<feature type="chain" id="PRO_0000411000" description="Endogenous retrovirus group V member 1 Env polyprotein">
    <location>
        <begin position="22"/>
        <end position="477"/>
    </location>
</feature>
<feature type="topological domain" description="Extracellular" evidence="1">
    <location>
        <begin position="22"/>
        <end position="321"/>
    </location>
</feature>
<feature type="transmembrane region" description="Helical" evidence="1">
    <location>
        <begin position="322"/>
        <end position="342"/>
    </location>
</feature>
<feature type="topological domain" description="Cytoplasmic" evidence="1">
    <location>
        <begin position="343"/>
        <end position="477"/>
    </location>
</feature>
<feature type="glycosylation site" description="N-linked (GlcNAc...) asparagine" evidence="1">
    <location>
        <position position="68"/>
    </location>
</feature>
<protein>
    <recommendedName>
        <fullName>Endogenous retrovirus group V member 1 Env polyprotein</fullName>
    </recommendedName>
    <alternativeName>
        <fullName>HERV-V_19q13.41 provirus ancestral Env polyprotein 1</fullName>
    </alternativeName>
</protein>
<dbReference type="EMBL" id="EU853142">
    <property type="protein sequence ID" value="ACI62853.1"/>
    <property type="molecule type" value="Genomic_DNA"/>
</dbReference>
<dbReference type="EMBL" id="AC010328">
    <property type="status" value="NOT_ANNOTATED_CDS"/>
    <property type="molecule type" value="Genomic_DNA"/>
</dbReference>
<dbReference type="CCDS" id="CCDS59419.1"/>
<dbReference type="RefSeq" id="NP_689686.2">
    <property type="nucleotide sequence ID" value="NM_152473.3"/>
</dbReference>
<dbReference type="SMR" id="B6SEH8"/>
<dbReference type="BioGRID" id="127071">
    <property type="interactions" value="1"/>
</dbReference>
<dbReference type="STRING" id="9606.ENSP00000473153"/>
<dbReference type="GlyCosmos" id="B6SEH8">
    <property type="glycosylation" value="1 site, No reported glycans"/>
</dbReference>
<dbReference type="GlyGen" id="B6SEH8">
    <property type="glycosylation" value="2 sites, 1 O-linked glycan (1 site)"/>
</dbReference>
<dbReference type="iPTMnet" id="B6SEH8"/>
<dbReference type="PhosphoSitePlus" id="B6SEH8"/>
<dbReference type="BioMuta" id="ERVV-1"/>
<dbReference type="PaxDb" id="9606-ENSP00000473153"/>
<dbReference type="PeptideAtlas" id="B6SEH8"/>
<dbReference type="Antibodypedia" id="82524">
    <property type="antibodies" value="2 antibodies from 2 providers"/>
</dbReference>
<dbReference type="DNASU" id="147664"/>
<dbReference type="Ensembl" id="ENST00000602168.2">
    <property type="protein sequence ID" value="ENSP00000473153.1"/>
    <property type="gene ID" value="ENSG00000269526.2"/>
</dbReference>
<dbReference type="GeneID" id="147664"/>
<dbReference type="KEGG" id="hsa:147664"/>
<dbReference type="MANE-Select" id="ENST00000602168.2">
    <property type="protein sequence ID" value="ENSP00000473153.1"/>
    <property type="RefSeq nucleotide sequence ID" value="NM_152473.3"/>
    <property type="RefSeq protein sequence ID" value="NP_689686.2"/>
</dbReference>
<dbReference type="AGR" id="HGNC:26501"/>
<dbReference type="CTD" id="147664"/>
<dbReference type="GeneCards" id="ERVV-1"/>
<dbReference type="HGNC" id="HGNC:26501">
    <property type="gene designation" value="ERVV-1"/>
</dbReference>
<dbReference type="HPA" id="ENSG00000269526">
    <property type="expression patterns" value="Tissue enriched (placenta)"/>
</dbReference>
<dbReference type="neXtProt" id="NX_B6SEH8"/>
<dbReference type="VEuPathDB" id="HostDB:ENSG00000269526"/>
<dbReference type="eggNOG" id="ENOG502SD08">
    <property type="taxonomic scope" value="Eukaryota"/>
</dbReference>
<dbReference type="GeneTree" id="ENSGT00940000164101"/>
<dbReference type="HOGENOM" id="CLU_045261_0_0_1"/>
<dbReference type="InParanoid" id="B6SEH8"/>
<dbReference type="OMA" id="KCDAQNP"/>
<dbReference type="OrthoDB" id="9558098at2759"/>
<dbReference type="PAN-GO" id="B6SEH8">
    <property type="GO annotations" value="0 GO annotations based on evolutionary models"/>
</dbReference>
<dbReference type="PhylomeDB" id="B6SEH8"/>
<dbReference type="PathwayCommons" id="B6SEH8"/>
<dbReference type="SignaLink" id="B6SEH8"/>
<dbReference type="BioGRID-ORCS" id="147664">
    <property type="hits" value="19 hits in 1055 CRISPR screens"/>
</dbReference>
<dbReference type="ChiTaRS" id="ERVV-1">
    <property type="organism name" value="human"/>
</dbReference>
<dbReference type="GenomeRNAi" id="147664"/>
<dbReference type="Pharos" id="B6SEH8">
    <property type="development level" value="Tdark"/>
</dbReference>
<dbReference type="PRO" id="PR:B6SEH8"/>
<dbReference type="Proteomes" id="UP000005640">
    <property type="component" value="Chromosome 19"/>
</dbReference>
<dbReference type="RNAct" id="B6SEH8">
    <property type="molecule type" value="protein"/>
</dbReference>
<dbReference type="Bgee" id="ENSG00000269526">
    <property type="expression patterns" value="Expressed in placenta and 24 other cell types or tissues"/>
</dbReference>
<dbReference type="ExpressionAtlas" id="B6SEH8">
    <property type="expression patterns" value="baseline and differential"/>
</dbReference>
<dbReference type="GO" id="GO:0016020">
    <property type="term" value="C:membrane"/>
    <property type="evidence" value="ECO:0007669"/>
    <property type="project" value="UniProtKB-SubCell"/>
</dbReference>
<dbReference type="CDD" id="cd09950">
    <property type="entry name" value="ENVV1-like_HR1-HR2"/>
    <property type="match status" value="1"/>
</dbReference>
<dbReference type="Gene3D" id="1.10.287.210">
    <property type="match status" value="1"/>
</dbReference>
<dbReference type="InterPro" id="IPR018154">
    <property type="entry name" value="TLV/ENV_coat_polyprotein"/>
</dbReference>
<dbReference type="PANTHER" id="PTHR10424:SF84">
    <property type="entry name" value="ENDOGENOUS RETROVIRUS GROUP V MEMBER 1 ENV POLYPROTEIN"/>
    <property type="match status" value="1"/>
</dbReference>
<dbReference type="PANTHER" id="PTHR10424">
    <property type="entry name" value="VIRAL ENVELOPE PROTEIN"/>
    <property type="match status" value="1"/>
</dbReference>
<dbReference type="Pfam" id="PF00429">
    <property type="entry name" value="TLV_coat"/>
    <property type="match status" value="1"/>
</dbReference>
<dbReference type="SUPFAM" id="SSF58069">
    <property type="entry name" value="Virus ectodomain"/>
    <property type="match status" value="1"/>
</dbReference>
<organism>
    <name type="scientific">Homo sapiens</name>
    <name type="common">Human</name>
    <dbReference type="NCBI Taxonomy" id="9606"/>
    <lineage>
        <taxon>Eukaryota</taxon>
        <taxon>Metazoa</taxon>
        <taxon>Chordata</taxon>
        <taxon>Craniata</taxon>
        <taxon>Vertebrata</taxon>
        <taxon>Euteleostomi</taxon>
        <taxon>Mammalia</taxon>
        <taxon>Eutheria</taxon>
        <taxon>Euarchontoglires</taxon>
        <taxon>Primates</taxon>
        <taxon>Haplorrhini</taxon>
        <taxon>Catarrhini</taxon>
        <taxon>Hominidae</taxon>
        <taxon>Homo</taxon>
    </lineage>
</organism>
<reference key="1">
    <citation type="journal article" date="2008" name="BMC Evol. Biol.">
        <title>Gene conversion and purifying selection of a placenta-specific ERV-V envelope gene during simian evolution.</title>
        <authorList>
            <person name="Kjeldbjerg A.L."/>
            <person name="Villesen P."/>
            <person name="Aagaard L."/>
            <person name="Pedersen F.S."/>
        </authorList>
    </citation>
    <scope>NUCLEOTIDE SEQUENCE [GENOMIC DNA]</scope>
    <scope>TISSUE SPECIFICITY</scope>
</reference>
<reference key="2">
    <citation type="journal article" date="2004" name="Nature">
        <title>The DNA sequence and biology of human chromosome 19.</title>
        <authorList>
            <person name="Grimwood J."/>
            <person name="Gordon L.A."/>
            <person name="Olsen A.S."/>
            <person name="Terry A."/>
            <person name="Schmutz J."/>
            <person name="Lamerdin J.E."/>
            <person name="Hellsten U."/>
            <person name="Goodstein D."/>
            <person name="Couronne O."/>
            <person name="Tran-Gyamfi M."/>
            <person name="Aerts A."/>
            <person name="Altherr M."/>
            <person name="Ashworth L."/>
            <person name="Bajorek E."/>
            <person name="Black S."/>
            <person name="Branscomb E."/>
            <person name="Caenepeel S."/>
            <person name="Carrano A.V."/>
            <person name="Caoile C."/>
            <person name="Chan Y.M."/>
            <person name="Christensen M."/>
            <person name="Cleland C.A."/>
            <person name="Copeland A."/>
            <person name="Dalin E."/>
            <person name="Dehal P."/>
            <person name="Denys M."/>
            <person name="Detter J.C."/>
            <person name="Escobar J."/>
            <person name="Flowers D."/>
            <person name="Fotopulos D."/>
            <person name="Garcia C."/>
            <person name="Georgescu A.M."/>
            <person name="Glavina T."/>
            <person name="Gomez M."/>
            <person name="Gonzales E."/>
            <person name="Groza M."/>
            <person name="Hammon N."/>
            <person name="Hawkins T."/>
            <person name="Haydu L."/>
            <person name="Ho I."/>
            <person name="Huang W."/>
            <person name="Israni S."/>
            <person name="Jett J."/>
            <person name="Kadner K."/>
            <person name="Kimball H."/>
            <person name="Kobayashi A."/>
            <person name="Larionov V."/>
            <person name="Leem S.-H."/>
            <person name="Lopez F."/>
            <person name="Lou Y."/>
            <person name="Lowry S."/>
            <person name="Malfatti S."/>
            <person name="Martinez D."/>
            <person name="McCready P.M."/>
            <person name="Medina C."/>
            <person name="Morgan J."/>
            <person name="Nelson K."/>
            <person name="Nolan M."/>
            <person name="Ovcharenko I."/>
            <person name="Pitluck S."/>
            <person name="Pollard M."/>
            <person name="Popkie A.P."/>
            <person name="Predki P."/>
            <person name="Quan G."/>
            <person name="Ramirez L."/>
            <person name="Rash S."/>
            <person name="Retterer J."/>
            <person name="Rodriguez A."/>
            <person name="Rogers S."/>
            <person name="Salamov A."/>
            <person name="Salazar A."/>
            <person name="She X."/>
            <person name="Smith D."/>
            <person name="Slezak T."/>
            <person name="Solovyev V."/>
            <person name="Thayer N."/>
            <person name="Tice H."/>
            <person name="Tsai M."/>
            <person name="Ustaszewska A."/>
            <person name="Vo N."/>
            <person name="Wagner M."/>
            <person name="Wheeler J."/>
            <person name="Wu K."/>
            <person name="Xie G."/>
            <person name="Yang J."/>
            <person name="Dubchak I."/>
            <person name="Furey T.S."/>
            <person name="DeJong P."/>
            <person name="Dickson M."/>
            <person name="Gordon D."/>
            <person name="Eichler E.E."/>
            <person name="Pennacchio L.A."/>
            <person name="Richardson P."/>
            <person name="Stubbs L."/>
            <person name="Rokhsar D.S."/>
            <person name="Myers R.M."/>
            <person name="Rubin E.M."/>
            <person name="Lucas S.M."/>
        </authorList>
    </citation>
    <scope>NUCLEOTIDE SEQUENCE [LARGE SCALE GENOMIC DNA]</scope>
</reference>
<name>ERVV1_HUMAN</name>
<keyword id="KW-0895">ERV</keyword>
<keyword id="KW-0325">Glycoprotein</keyword>
<keyword id="KW-0472">Membrane</keyword>
<keyword id="KW-1185">Reference proteome</keyword>
<keyword id="KW-0732">Signal</keyword>
<keyword id="KW-0812">Transmembrane</keyword>
<keyword id="KW-1133">Transmembrane helix</keyword>
<keyword id="KW-0814">Transposable element</keyword>
<gene>
    <name type="primary">ERVV-1</name>
    <name type="synonym">ENVV1</name>
</gene>
<sequence length="477" mass="52557">MTEKFLFLYLSLLPMPLLSQAQWNENSLVSFSKIIASGNHLSNCWICHNFITRSSSYQYILVRNFSLNLTFGSGIPEGQHKSVPLQVSLANSAHQVPCLDLTPPFNQSSKTSFYFYNCSSLNQTCCPCPEGHCDRKNTSEEGFPSPTIHPMSFSPAGCHPNLTHWCPAKQMNDYRDKSPQNRCAAWEGKELITWRVLYLLPKAHTVPTWPKSTVPLGGPLSPACNQTIPAGWKSQLHKWFDSHIPRWACTPPGYVFLCGPQKNKLPFDGSPKITYSTPPVANLYTCINNIQHTGECAVGLLGPRGIGVTIYNTTQPRQKRALGLILAGMGAAIGMIAPWGGFTYHDVTLRNLSRQIDNIAKSTRDSISKLKASIDSLANVVMNNRLALDYLLAEQGGVCAVISKSCCIYVNNSGAIEEDIKKIYDEVTWLHNFGKGDSAGSIWEAVKSALPSLTWFVPLLGPAALNSLLSPLWPLSL</sequence>
<comment type="subcellular location">
    <subcellularLocation>
        <location evidence="3">Membrane</location>
        <topology evidence="3">Single-pass type I membrane protein</topology>
    </subcellularLocation>
</comment>
<comment type="tissue specificity">
    <text evidence="2">Expressed in placenta.</text>
</comment>
<comment type="similarity">
    <text evidence="3">Belongs to the gamma type-C retroviral envelope protein family.</text>
</comment>